<evidence type="ECO:0000255" key="1"/>
<evidence type="ECO:0000255" key="2">
    <source>
        <dbReference type="PROSITE-ProRule" id="PRU00498"/>
    </source>
</evidence>
<evidence type="ECO:0000255" key="3">
    <source>
        <dbReference type="PROSITE-ProRule" id="PRU00818"/>
    </source>
</evidence>
<evidence type="ECO:0000303" key="4">
    <source>
    </source>
</evidence>
<evidence type="ECO:0000303" key="5">
    <source>
    </source>
</evidence>
<evidence type="ECO:0000305" key="6"/>
<evidence type="ECO:0000312" key="7">
    <source>
        <dbReference type="Araport" id="AT2G27035"/>
    </source>
</evidence>
<evidence type="ECO:0000312" key="8">
    <source>
        <dbReference type="EMBL" id="AC005623"/>
    </source>
</evidence>
<keyword id="KW-1003">Cell membrane</keyword>
<keyword id="KW-1015">Disulfide bond</keyword>
<keyword id="KW-0325">Glycoprotein</keyword>
<keyword id="KW-0336">GPI-anchor</keyword>
<keyword id="KW-0449">Lipoprotein</keyword>
<keyword id="KW-0472">Membrane</keyword>
<keyword id="KW-1185">Reference proteome</keyword>
<keyword id="KW-0732">Signal</keyword>
<accession>F4IVN9</accession>
<organism>
    <name type="scientific">Arabidopsis thaliana</name>
    <name type="common">Mouse-ear cress</name>
    <dbReference type="NCBI Taxonomy" id="3702"/>
    <lineage>
        <taxon>Eukaryota</taxon>
        <taxon>Viridiplantae</taxon>
        <taxon>Streptophyta</taxon>
        <taxon>Embryophyta</taxon>
        <taxon>Tracheophyta</taxon>
        <taxon>Spermatophyta</taxon>
        <taxon>Magnoliopsida</taxon>
        <taxon>eudicotyledons</taxon>
        <taxon>Gunneridae</taxon>
        <taxon>Pentapetalae</taxon>
        <taxon>rosids</taxon>
        <taxon>malvids</taxon>
        <taxon>Brassicales</taxon>
        <taxon>Brassicaceae</taxon>
        <taxon>Camelineae</taxon>
        <taxon>Arabidopsis</taxon>
    </lineage>
</organism>
<reference key="1">
    <citation type="journal article" date="1999" name="Nature">
        <title>Sequence and analysis of chromosome 2 of the plant Arabidopsis thaliana.</title>
        <authorList>
            <person name="Lin X."/>
            <person name="Kaul S."/>
            <person name="Rounsley S.D."/>
            <person name="Shea T.P."/>
            <person name="Benito M.-I."/>
            <person name="Town C.D."/>
            <person name="Fujii C.Y."/>
            <person name="Mason T.M."/>
            <person name="Bowman C.L."/>
            <person name="Barnstead M.E."/>
            <person name="Feldblyum T.V."/>
            <person name="Buell C.R."/>
            <person name="Ketchum K.A."/>
            <person name="Lee J.J."/>
            <person name="Ronning C.M."/>
            <person name="Koo H.L."/>
            <person name="Moffat K.S."/>
            <person name="Cronin L.A."/>
            <person name="Shen M."/>
            <person name="Pai G."/>
            <person name="Van Aken S."/>
            <person name="Umayam L."/>
            <person name="Tallon L.J."/>
            <person name="Gill J.E."/>
            <person name="Adams M.D."/>
            <person name="Carrera A.J."/>
            <person name="Creasy T.H."/>
            <person name="Goodman H.M."/>
            <person name="Somerville C.R."/>
            <person name="Copenhaver G.P."/>
            <person name="Preuss D."/>
            <person name="Nierman W.C."/>
            <person name="White O."/>
            <person name="Eisen J.A."/>
            <person name="Salzberg S.L."/>
            <person name="Fraser C.M."/>
            <person name="Venter J.C."/>
        </authorList>
    </citation>
    <scope>NUCLEOTIDE SEQUENCE [LARGE SCALE GENOMIC DNA]</scope>
    <source>
        <strain>cv. Columbia</strain>
    </source>
</reference>
<reference key="2">
    <citation type="journal article" date="2017" name="Plant J.">
        <title>Araport11: a complete reannotation of the Arabidopsis thaliana reference genome.</title>
        <authorList>
            <person name="Cheng C.Y."/>
            <person name="Krishnakumar V."/>
            <person name="Chan A.P."/>
            <person name="Thibaud-Nissen F."/>
            <person name="Schobel S."/>
            <person name="Town C.D."/>
        </authorList>
    </citation>
    <scope>GENOME REANNOTATION</scope>
    <source>
        <strain>cv. Columbia</strain>
    </source>
</reference>
<reference key="3">
    <citation type="journal article" date="2002" name="Plant Physiol.">
        <title>Cloning and sequencing of cDNAs for hypothetical genes from chromosome 2 of Arabidopsis.</title>
        <authorList>
            <person name="Xiao Y.-L."/>
            <person name="Malik M."/>
            <person name="Whitelaw C.A."/>
            <person name="Town C.D."/>
        </authorList>
    </citation>
    <scope>NUCLEOTIDE SEQUENCE [LARGE SCALE MRNA]</scope>
    <source>
        <strain>cv. Columbia</strain>
    </source>
</reference>
<reference key="4">
    <citation type="journal article" date="2009" name="Biosci. Biotechnol. Biochem.">
        <title>Genome-wide identification, structure and expression studies, and mutant collection of 22 early nodulin-like protein genes in Arabidopsis.</title>
        <authorList>
            <person name="Mashiguchi K."/>
            <person name="Asami T."/>
            <person name="Suzuki Y."/>
        </authorList>
    </citation>
    <scope>GENE FAMILY</scope>
    <scope>NOMENCLATURE</scope>
    <source>
        <strain>cv. Columbia</strain>
    </source>
</reference>
<reference key="5">
    <citation type="journal article" date="2014" name="Plant Cell Physiol.">
        <title>Emerging functions of nodulin-like proteins in non-nodulating plant species.</title>
        <authorList>
            <person name="Denance N."/>
            <person name="Szurek B."/>
            <person name="Noel L.D."/>
        </authorList>
    </citation>
    <scope>REVIEW ON NODULIN-LIKE PROTEINS</scope>
</reference>
<feature type="signal peptide" evidence="1">
    <location>
        <begin position="1"/>
        <end position="25"/>
    </location>
</feature>
<feature type="chain" id="PRO_0000457748" description="Early nodulin-like protein 20">
    <location>
        <begin position="26"/>
        <end position="138"/>
    </location>
</feature>
<feature type="propeptide" id="PRO_0000457749" description="Removed in mature form" evidence="1">
    <location>
        <begin position="139"/>
        <end position="163"/>
    </location>
</feature>
<feature type="domain" description="Phytocyanin" evidence="3">
    <location>
        <begin position="26"/>
        <end position="126"/>
    </location>
</feature>
<feature type="lipid moiety-binding region" description="GPI-anchor amidated serine" evidence="1">
    <location>
        <position position="138"/>
    </location>
</feature>
<feature type="glycosylation site" description="N-linked (GlcNAc...) asparagine" evidence="2">
    <location>
        <position position="42"/>
    </location>
</feature>
<feature type="glycosylation site" description="N-linked (GlcNAc...) asparagine" evidence="2">
    <location>
        <position position="63"/>
    </location>
</feature>
<feature type="glycosylation site" description="N-linked (GlcNAc...) asparagine" evidence="2">
    <location>
        <position position="73"/>
    </location>
</feature>
<feature type="glycosylation site" description="N-linked (GlcNAc...) asparagine" evidence="2">
    <location>
        <position position="88"/>
    </location>
</feature>
<feature type="glycosylation site" description="N-linked (GlcNAc...) asparagine" evidence="2">
    <location>
        <position position="135"/>
    </location>
</feature>
<feature type="disulfide bond" evidence="3">
    <location>
        <begin position="80"/>
        <end position="114"/>
    </location>
</feature>
<protein>
    <recommendedName>
        <fullName evidence="4">Early nodulin-like protein 20</fullName>
        <shortName evidence="4">AtENODL20</shortName>
    </recommendedName>
    <alternativeName>
        <fullName evidence="6">Phytocyanin-like protein ENODL20</fullName>
    </alternativeName>
</protein>
<name>ENL20_ARATH</name>
<comment type="function">
    <text evidence="5">May act as a carbohydrate transporter.</text>
</comment>
<comment type="subcellular location">
    <subcellularLocation>
        <location evidence="1">Cell membrane</location>
        <topology evidence="1">Lipid-anchor</topology>
        <topology evidence="1">GPI-anchor</topology>
    </subcellularLocation>
</comment>
<comment type="similarity">
    <text evidence="6">Belongs to the early nodulin-like (ENODL) family.</text>
</comment>
<sequence>MMGKYLWALVYVTVMILIIVVEVESSLHRVGGGRYTWNSDVNFSDWANHQRFYSGDWLYFGFNRTRHNILQVNKSSYEQCVDNDYIFNITRGGRDVFQLLEPKPYYFICGRGYCLKGMKLAITVLPQPPPSAPTNFTSTTTPLIPPNAITAAILIFAFKALLL</sequence>
<proteinExistence type="evidence at transcript level"/>
<dbReference type="EMBL" id="AC005623">
    <property type="status" value="NOT_ANNOTATED_CDS"/>
    <property type="molecule type" value="Genomic_DNA"/>
</dbReference>
<dbReference type="EMBL" id="CP002685">
    <property type="protein sequence ID" value="AEC07927.1"/>
    <property type="molecule type" value="Genomic_DNA"/>
</dbReference>
<dbReference type="EMBL" id="AY299237">
    <property type="status" value="NOT_ANNOTATED_CDS"/>
    <property type="molecule type" value="mRNA"/>
</dbReference>
<dbReference type="RefSeq" id="NP_973539.1">
    <property type="nucleotide sequence ID" value="NM_201810.2"/>
</dbReference>
<dbReference type="SMR" id="F4IVN9"/>
<dbReference type="FunCoup" id="F4IVN9">
    <property type="interactions" value="26"/>
</dbReference>
<dbReference type="STRING" id="3702.F4IVN9"/>
<dbReference type="GlyGen" id="F4IVN9">
    <property type="glycosylation" value="5 sites"/>
</dbReference>
<dbReference type="PaxDb" id="3702-AT2G27035.1"/>
<dbReference type="ProteomicsDB" id="219758"/>
<dbReference type="EnsemblPlants" id="AT2G27035.1">
    <property type="protein sequence ID" value="AT2G27035.1"/>
    <property type="gene ID" value="AT2G27035"/>
</dbReference>
<dbReference type="GeneID" id="2745563"/>
<dbReference type="Gramene" id="AT2G27035.1">
    <property type="protein sequence ID" value="AT2G27035.1"/>
    <property type="gene ID" value="AT2G27035"/>
</dbReference>
<dbReference type="KEGG" id="ath:AT2G27035"/>
<dbReference type="Araport" id="AT2G27035"/>
<dbReference type="TAIR" id="AT2G27035">
    <property type="gene designation" value="ENODL20"/>
</dbReference>
<dbReference type="eggNOG" id="ENOG502S30B">
    <property type="taxonomic scope" value="Eukaryota"/>
</dbReference>
<dbReference type="HOGENOM" id="CLU_058719_3_4_1"/>
<dbReference type="InParanoid" id="F4IVN9"/>
<dbReference type="OMA" id="GRFTWAP"/>
<dbReference type="OrthoDB" id="676939at2759"/>
<dbReference type="PhylomeDB" id="F4IVN9"/>
<dbReference type="PRO" id="PR:F4IVN9"/>
<dbReference type="Proteomes" id="UP000006548">
    <property type="component" value="Chromosome 2"/>
</dbReference>
<dbReference type="ExpressionAtlas" id="F4IVN9">
    <property type="expression patterns" value="baseline and differential"/>
</dbReference>
<dbReference type="GO" id="GO:0005886">
    <property type="term" value="C:plasma membrane"/>
    <property type="evidence" value="ECO:0007669"/>
    <property type="project" value="UniProtKB-SubCell"/>
</dbReference>
<dbReference type="GO" id="GO:0098552">
    <property type="term" value="C:side of membrane"/>
    <property type="evidence" value="ECO:0007669"/>
    <property type="project" value="UniProtKB-KW"/>
</dbReference>
<dbReference type="GO" id="GO:0009055">
    <property type="term" value="F:electron transfer activity"/>
    <property type="evidence" value="ECO:0007669"/>
    <property type="project" value="InterPro"/>
</dbReference>
<dbReference type="CDD" id="cd11017">
    <property type="entry name" value="Phytocyanin_like_1"/>
    <property type="match status" value="1"/>
</dbReference>
<dbReference type="FunFam" id="2.60.40.420:FF:000018">
    <property type="entry name" value="Lamin-like protein"/>
    <property type="match status" value="1"/>
</dbReference>
<dbReference type="Gene3D" id="2.60.40.420">
    <property type="entry name" value="Cupredoxins - blue copper proteins"/>
    <property type="match status" value="1"/>
</dbReference>
<dbReference type="InterPro" id="IPR008972">
    <property type="entry name" value="Cupredoxin"/>
</dbReference>
<dbReference type="InterPro" id="IPR039391">
    <property type="entry name" value="Phytocyanin-like"/>
</dbReference>
<dbReference type="InterPro" id="IPR003245">
    <property type="entry name" value="Phytocyanin_dom"/>
</dbReference>
<dbReference type="PANTHER" id="PTHR33021">
    <property type="entry name" value="BLUE COPPER PROTEIN"/>
    <property type="match status" value="1"/>
</dbReference>
<dbReference type="PANTHER" id="PTHR33021:SF262">
    <property type="entry name" value="EARLY NODULIN-LIKE PROTEIN 20"/>
    <property type="match status" value="1"/>
</dbReference>
<dbReference type="Pfam" id="PF02298">
    <property type="entry name" value="Cu_bind_like"/>
    <property type="match status" value="1"/>
</dbReference>
<dbReference type="SUPFAM" id="SSF49503">
    <property type="entry name" value="Cupredoxins"/>
    <property type="match status" value="1"/>
</dbReference>
<dbReference type="PROSITE" id="PS51485">
    <property type="entry name" value="PHYTOCYANIN"/>
    <property type="match status" value="1"/>
</dbReference>
<gene>
    <name evidence="4" type="primary">ENODL20</name>
    <name evidence="4" type="synonym">EN20</name>
    <name evidence="7" type="ordered locus">At2g27035</name>
    <name evidence="8" type="ORF">T20P8</name>
</gene>